<keyword id="KW-0963">Cytoplasm</keyword>
<keyword id="KW-0275">Fatty acid biosynthesis</keyword>
<keyword id="KW-0276">Fatty acid metabolism</keyword>
<keyword id="KW-0444">Lipid biosynthesis</keyword>
<keyword id="KW-0443">Lipid metabolism</keyword>
<keyword id="KW-0460">Magnesium</keyword>
<keyword id="KW-0479">Metal-binding</keyword>
<keyword id="KW-0808">Transferase</keyword>
<dbReference type="EC" id="2.7.8.7" evidence="1"/>
<dbReference type="EMBL" id="CP000627">
    <property type="protein sequence ID" value="ABQ21687.1"/>
    <property type="molecule type" value="Genomic_DNA"/>
</dbReference>
<dbReference type="EMBL" id="CP001235">
    <property type="protein sequence ID" value="ACP10559.1"/>
    <property type="molecule type" value="Genomic_DNA"/>
</dbReference>
<dbReference type="RefSeq" id="WP_000635065.1">
    <property type="nucleotide sequence ID" value="NZ_JAACZH010000010.1"/>
</dbReference>
<dbReference type="SMR" id="A5F5H4"/>
<dbReference type="KEGG" id="vco:VC0395_A2035"/>
<dbReference type="KEGG" id="vcr:VC395_2572"/>
<dbReference type="PATRIC" id="fig|345073.21.peg.2477"/>
<dbReference type="eggNOG" id="COG0736">
    <property type="taxonomic scope" value="Bacteria"/>
</dbReference>
<dbReference type="HOGENOM" id="CLU_089696_3_1_6"/>
<dbReference type="OrthoDB" id="517356at2"/>
<dbReference type="Proteomes" id="UP000000249">
    <property type="component" value="Chromosome 2"/>
</dbReference>
<dbReference type="GO" id="GO:0005829">
    <property type="term" value="C:cytosol"/>
    <property type="evidence" value="ECO:0007669"/>
    <property type="project" value="TreeGrafter"/>
</dbReference>
<dbReference type="GO" id="GO:0008897">
    <property type="term" value="F:holo-[acyl-carrier-protein] synthase activity"/>
    <property type="evidence" value="ECO:0007669"/>
    <property type="project" value="UniProtKB-UniRule"/>
</dbReference>
<dbReference type="GO" id="GO:0000287">
    <property type="term" value="F:magnesium ion binding"/>
    <property type="evidence" value="ECO:0007669"/>
    <property type="project" value="UniProtKB-UniRule"/>
</dbReference>
<dbReference type="GO" id="GO:0006633">
    <property type="term" value="P:fatty acid biosynthetic process"/>
    <property type="evidence" value="ECO:0007669"/>
    <property type="project" value="UniProtKB-UniRule"/>
</dbReference>
<dbReference type="GO" id="GO:0019878">
    <property type="term" value="P:lysine biosynthetic process via aminoadipic acid"/>
    <property type="evidence" value="ECO:0007669"/>
    <property type="project" value="TreeGrafter"/>
</dbReference>
<dbReference type="FunFam" id="3.90.470.20:FF:000001">
    <property type="entry name" value="Holo-[acyl-carrier-protein] synthase"/>
    <property type="match status" value="1"/>
</dbReference>
<dbReference type="Gene3D" id="3.90.470.20">
    <property type="entry name" value="4'-phosphopantetheinyl transferase domain"/>
    <property type="match status" value="1"/>
</dbReference>
<dbReference type="HAMAP" id="MF_00101">
    <property type="entry name" value="AcpS"/>
    <property type="match status" value="1"/>
</dbReference>
<dbReference type="InterPro" id="IPR008278">
    <property type="entry name" value="4-PPantetheinyl_Trfase_dom"/>
</dbReference>
<dbReference type="InterPro" id="IPR037143">
    <property type="entry name" value="4-PPantetheinyl_Trfase_dom_sf"/>
</dbReference>
<dbReference type="InterPro" id="IPR002582">
    <property type="entry name" value="ACPS"/>
</dbReference>
<dbReference type="InterPro" id="IPR050559">
    <property type="entry name" value="P-Pant_transferase_sf"/>
</dbReference>
<dbReference type="InterPro" id="IPR004568">
    <property type="entry name" value="Ppantetheine-prot_Trfase_dom"/>
</dbReference>
<dbReference type="NCBIfam" id="TIGR00516">
    <property type="entry name" value="acpS"/>
    <property type="match status" value="1"/>
</dbReference>
<dbReference type="NCBIfam" id="TIGR00556">
    <property type="entry name" value="pantethn_trn"/>
    <property type="match status" value="1"/>
</dbReference>
<dbReference type="PANTHER" id="PTHR12215:SF10">
    <property type="entry name" value="L-AMINOADIPATE-SEMIALDEHYDE DEHYDROGENASE-PHOSPHOPANTETHEINYL TRANSFERASE"/>
    <property type="match status" value="1"/>
</dbReference>
<dbReference type="PANTHER" id="PTHR12215">
    <property type="entry name" value="PHOSPHOPANTETHEINE TRANSFERASE"/>
    <property type="match status" value="1"/>
</dbReference>
<dbReference type="Pfam" id="PF01648">
    <property type="entry name" value="ACPS"/>
    <property type="match status" value="1"/>
</dbReference>
<dbReference type="SUPFAM" id="SSF56214">
    <property type="entry name" value="4'-phosphopantetheinyl transferase"/>
    <property type="match status" value="1"/>
</dbReference>
<accession>A5F5H4</accession>
<accession>C3M4U8</accession>
<sequence>MIVGLGTDIAEIERVEKALARSGENFARRILTDSELEQFHASKQQGRFLAKRFAAKEAASKALGTGIAQGVTFHDFTISHDKLGKPLLTLSGQAAELASQLQIENIHLSISDERHYAMATVILERR</sequence>
<reference key="1">
    <citation type="submission" date="2007-03" db="EMBL/GenBank/DDBJ databases">
        <authorList>
            <person name="Heidelberg J."/>
        </authorList>
    </citation>
    <scope>NUCLEOTIDE SEQUENCE [LARGE SCALE GENOMIC DNA]</scope>
    <source>
        <strain>ATCC 39541 / Classical Ogawa 395 / O395</strain>
    </source>
</reference>
<reference key="2">
    <citation type="journal article" date="2008" name="PLoS ONE">
        <title>A recalibrated molecular clock and independent origins for the cholera pandemic clones.</title>
        <authorList>
            <person name="Feng L."/>
            <person name="Reeves P.R."/>
            <person name="Lan R."/>
            <person name="Ren Y."/>
            <person name="Gao C."/>
            <person name="Zhou Z."/>
            <person name="Ren Y."/>
            <person name="Cheng J."/>
            <person name="Wang W."/>
            <person name="Wang J."/>
            <person name="Qian W."/>
            <person name="Li D."/>
            <person name="Wang L."/>
        </authorList>
    </citation>
    <scope>NUCLEOTIDE SEQUENCE [LARGE SCALE GENOMIC DNA]</scope>
    <source>
        <strain>ATCC 39541 / Classical Ogawa 395 / O395</strain>
    </source>
</reference>
<protein>
    <recommendedName>
        <fullName evidence="1">Holo-[acyl-carrier-protein] synthase</fullName>
        <shortName evidence="1">Holo-ACP synthase</shortName>
        <ecNumber evidence="1">2.7.8.7</ecNumber>
    </recommendedName>
    <alternativeName>
        <fullName evidence="1">4'-phosphopantetheinyl transferase AcpS</fullName>
    </alternativeName>
</protein>
<name>ACPS_VIBC3</name>
<feature type="chain" id="PRO_1000071300" description="Holo-[acyl-carrier-protein] synthase">
    <location>
        <begin position="1"/>
        <end position="126"/>
    </location>
</feature>
<feature type="binding site" evidence="1">
    <location>
        <position position="8"/>
    </location>
    <ligand>
        <name>Mg(2+)</name>
        <dbReference type="ChEBI" id="CHEBI:18420"/>
    </ligand>
</feature>
<feature type="binding site" evidence="1">
    <location>
        <position position="57"/>
    </location>
    <ligand>
        <name>Mg(2+)</name>
        <dbReference type="ChEBI" id="CHEBI:18420"/>
    </ligand>
</feature>
<gene>
    <name evidence="1" type="primary">acpS</name>
    <name type="ordered locus">VC0395_A2035</name>
    <name type="ordered locus">VC395_2572</name>
</gene>
<evidence type="ECO:0000255" key="1">
    <source>
        <dbReference type="HAMAP-Rule" id="MF_00101"/>
    </source>
</evidence>
<proteinExistence type="inferred from homology"/>
<organism>
    <name type="scientific">Vibrio cholerae serotype O1 (strain ATCC 39541 / Classical Ogawa 395 / O395)</name>
    <dbReference type="NCBI Taxonomy" id="345073"/>
    <lineage>
        <taxon>Bacteria</taxon>
        <taxon>Pseudomonadati</taxon>
        <taxon>Pseudomonadota</taxon>
        <taxon>Gammaproteobacteria</taxon>
        <taxon>Vibrionales</taxon>
        <taxon>Vibrionaceae</taxon>
        <taxon>Vibrio</taxon>
    </lineage>
</organism>
<comment type="function">
    <text evidence="1">Transfers the 4'-phosphopantetheine moiety from coenzyme A to a Ser of acyl-carrier-protein.</text>
</comment>
<comment type="catalytic activity">
    <reaction evidence="1">
        <text>apo-[ACP] + CoA = holo-[ACP] + adenosine 3',5'-bisphosphate + H(+)</text>
        <dbReference type="Rhea" id="RHEA:12068"/>
        <dbReference type="Rhea" id="RHEA-COMP:9685"/>
        <dbReference type="Rhea" id="RHEA-COMP:9690"/>
        <dbReference type="ChEBI" id="CHEBI:15378"/>
        <dbReference type="ChEBI" id="CHEBI:29999"/>
        <dbReference type="ChEBI" id="CHEBI:57287"/>
        <dbReference type="ChEBI" id="CHEBI:58343"/>
        <dbReference type="ChEBI" id="CHEBI:64479"/>
        <dbReference type="EC" id="2.7.8.7"/>
    </reaction>
</comment>
<comment type="cofactor">
    <cofactor evidence="1">
        <name>Mg(2+)</name>
        <dbReference type="ChEBI" id="CHEBI:18420"/>
    </cofactor>
</comment>
<comment type="subcellular location">
    <subcellularLocation>
        <location evidence="1">Cytoplasm</location>
    </subcellularLocation>
</comment>
<comment type="similarity">
    <text evidence="1">Belongs to the P-Pant transferase superfamily. AcpS family.</text>
</comment>